<organism>
    <name type="scientific">Acrochordus granulatus</name>
    <name type="common">Rasp-skinned water snake</name>
    <dbReference type="NCBI Taxonomy" id="46287"/>
    <lineage>
        <taxon>Eukaryota</taxon>
        <taxon>Metazoa</taxon>
        <taxon>Chordata</taxon>
        <taxon>Craniata</taxon>
        <taxon>Vertebrata</taxon>
        <taxon>Euteleostomi</taxon>
        <taxon>Lepidosauria</taxon>
        <taxon>Squamata</taxon>
        <taxon>Bifurcata</taxon>
        <taxon>Unidentata</taxon>
        <taxon>Episquamata</taxon>
        <taxon>Toxicofera</taxon>
        <taxon>Serpentes</taxon>
        <taxon>Acrochordoidea</taxon>
        <taxon>Acrochordidae</taxon>
        <taxon>Acrochordus</taxon>
    </lineage>
</organism>
<name>CYB_ACRGR</name>
<feature type="chain" id="PRO_0000060528" description="Cytochrome b">
    <location>
        <begin position="1"/>
        <end position="372"/>
    </location>
</feature>
<feature type="transmembrane region" description="Helical" evidence="2">
    <location>
        <begin position="25"/>
        <end position="45"/>
    </location>
</feature>
<feature type="transmembrane region" description="Helical" evidence="2">
    <location>
        <begin position="69"/>
        <end position="90"/>
    </location>
</feature>
<feature type="transmembrane region" description="Helical" evidence="2">
    <location>
        <begin position="105"/>
        <end position="125"/>
    </location>
</feature>
<feature type="transmembrane region" description="Helical" evidence="2">
    <location>
        <begin position="170"/>
        <end position="190"/>
    </location>
</feature>
<feature type="transmembrane region" description="Helical" evidence="2">
    <location>
        <begin position="218"/>
        <end position="238"/>
    </location>
</feature>
<feature type="transmembrane region" description="Helical" evidence="2">
    <location>
        <begin position="280"/>
        <end position="300"/>
    </location>
</feature>
<feature type="transmembrane region" description="Helical" evidence="2">
    <location>
        <begin position="312"/>
        <end position="332"/>
    </location>
</feature>
<feature type="transmembrane region" description="Helical" evidence="2">
    <location>
        <begin position="339"/>
        <end position="358"/>
    </location>
</feature>
<feature type="binding site" description="axial binding residue" evidence="2">
    <location>
        <position position="75"/>
    </location>
    <ligand>
        <name>heme b</name>
        <dbReference type="ChEBI" id="CHEBI:60344"/>
        <label>b562</label>
    </ligand>
    <ligandPart>
        <name>Fe</name>
        <dbReference type="ChEBI" id="CHEBI:18248"/>
    </ligandPart>
</feature>
<feature type="binding site" description="axial binding residue" evidence="2">
    <location>
        <position position="89"/>
    </location>
    <ligand>
        <name>heme b</name>
        <dbReference type="ChEBI" id="CHEBI:60344"/>
        <label>b566</label>
    </ligand>
    <ligandPart>
        <name>Fe</name>
        <dbReference type="ChEBI" id="CHEBI:18248"/>
    </ligandPart>
</feature>
<feature type="binding site" description="axial binding residue" evidence="2">
    <location>
        <position position="174"/>
    </location>
    <ligand>
        <name>heme b</name>
        <dbReference type="ChEBI" id="CHEBI:60344"/>
        <label>b562</label>
    </ligand>
    <ligandPart>
        <name>Fe</name>
        <dbReference type="ChEBI" id="CHEBI:18248"/>
    </ligandPart>
</feature>
<feature type="binding site" description="axial binding residue" evidence="2">
    <location>
        <position position="188"/>
    </location>
    <ligand>
        <name>heme b</name>
        <dbReference type="ChEBI" id="CHEBI:60344"/>
        <label>b566</label>
    </ligand>
    <ligandPart>
        <name>Fe</name>
        <dbReference type="ChEBI" id="CHEBI:18248"/>
    </ligandPart>
</feature>
<feature type="binding site" evidence="2">
    <location>
        <position position="193"/>
    </location>
    <ligand>
        <name>a ubiquinone</name>
        <dbReference type="ChEBI" id="CHEBI:16389"/>
    </ligand>
</feature>
<reference key="1">
    <citation type="journal article" date="2000" name="Mol. Phylogenet. Evol.">
        <title>Phylogenetic relationships of elapid snakes based on cytochrome b mtDNA sequences.</title>
        <authorList>
            <person name="Slowinski J.B."/>
            <person name="Keogh J.S."/>
        </authorList>
    </citation>
    <scope>NUCLEOTIDE SEQUENCE [GENOMIC DNA]</scope>
</reference>
<comment type="function">
    <text evidence="2">Component of the ubiquinol-cytochrome c reductase complex (complex III or cytochrome b-c1 complex) that is part of the mitochondrial respiratory chain. The b-c1 complex mediates electron transfer from ubiquinol to cytochrome c. Contributes to the generation of a proton gradient across the mitochondrial membrane that is then used for ATP synthesis.</text>
</comment>
<comment type="cofactor">
    <cofactor evidence="2">
        <name>heme b</name>
        <dbReference type="ChEBI" id="CHEBI:60344"/>
    </cofactor>
    <text evidence="2">Binds 2 heme b groups non-covalently.</text>
</comment>
<comment type="subunit">
    <text evidence="2">The cytochrome bc1 complex contains 3 respiratory subunits (MT-CYB, CYC1 and UQCRFS1), 2 core proteins (UQCRC1 and UQCRC2) and probably 6 low-molecular weight proteins.</text>
</comment>
<comment type="subcellular location">
    <subcellularLocation>
        <location evidence="2">Mitochondrion inner membrane</location>
        <topology evidence="2">Multi-pass membrane protein</topology>
    </subcellularLocation>
</comment>
<comment type="miscellaneous">
    <text evidence="1">Heme 1 (or BL or b562) is low-potential and absorbs at about 562 nm, and heme 2 (or BH or b566) is high-potential and absorbs at about 566 nm.</text>
</comment>
<comment type="similarity">
    <text evidence="3 4">Belongs to the cytochrome b family.</text>
</comment>
<comment type="caution">
    <text evidence="2">The full-length protein contains only eight transmembrane helices, not nine as predicted by bioinformatics tools.</text>
</comment>
<gene>
    <name type="primary">MT-CYB</name>
    <name type="synonym">COB</name>
    <name type="synonym">CYTB</name>
    <name type="synonym">MTCYB</name>
</gene>
<keyword id="KW-0249">Electron transport</keyword>
<keyword id="KW-0349">Heme</keyword>
<keyword id="KW-0408">Iron</keyword>
<keyword id="KW-0472">Membrane</keyword>
<keyword id="KW-0479">Metal-binding</keyword>
<keyword id="KW-0496">Mitochondrion</keyword>
<keyword id="KW-0999">Mitochondrion inner membrane</keyword>
<keyword id="KW-0679">Respiratory chain</keyword>
<keyword id="KW-0812">Transmembrane</keyword>
<keyword id="KW-1133">Transmembrane helix</keyword>
<keyword id="KW-0813">Transport</keyword>
<keyword id="KW-0830">Ubiquinone</keyword>
<evidence type="ECO:0000250" key="1"/>
<evidence type="ECO:0000250" key="2">
    <source>
        <dbReference type="UniProtKB" id="P00157"/>
    </source>
</evidence>
<evidence type="ECO:0000255" key="3">
    <source>
        <dbReference type="PROSITE-ProRule" id="PRU00967"/>
    </source>
</evidence>
<evidence type="ECO:0000255" key="4">
    <source>
        <dbReference type="PROSITE-ProRule" id="PRU00968"/>
    </source>
</evidence>
<geneLocation type="mitochondrion"/>
<proteinExistence type="inferred from homology"/>
<accession>Q9MLI7</accession>
<sequence length="372" mass="42593">MSHQHILTLFNLLPVATNISTWWNFGSMLLTCSIIQMTTGFFLAIHYTANTNLAFSSVIHILRDIPNGWCLQNLHSIGASMFFICIYIHIARGLYFGSYMNKKVWMSGILLLTILMATSFFGYVLPWGQMSFWAATVITNLLTAVPYLGTNLTIWLWGGFAINDPTLTRFFALHFILPFMIMSTSSIHIILLHEEGSSNPLGTNSDIDKIPFHPYHSYKDLFMLTLLLFTMMSIMSFSPDMFNDSENFSKANPMMTPQHIKPEWYFLFAYGILRSIPNKLGGTLALLLSIMILLLPPFTHTSHIRSMTFRPMAQFLFWTMITTFVILTWAASKPVESPYITISQMASTMYFLFFIINPLLGWMENKILNTNH</sequence>
<protein>
    <recommendedName>
        <fullName>Cytochrome b</fullName>
    </recommendedName>
    <alternativeName>
        <fullName>Complex III subunit 3</fullName>
    </alternativeName>
    <alternativeName>
        <fullName>Complex III subunit III</fullName>
    </alternativeName>
    <alternativeName>
        <fullName>Cytochrome b-c1 complex subunit 3</fullName>
    </alternativeName>
    <alternativeName>
        <fullName>Ubiquinol-cytochrome-c reductase complex cytochrome b subunit</fullName>
    </alternativeName>
</protein>
<dbReference type="EMBL" id="AF217841">
    <property type="protein sequence ID" value="AAF37260.1"/>
    <property type="molecule type" value="Genomic_DNA"/>
</dbReference>
<dbReference type="SMR" id="Q9MLI7"/>
<dbReference type="GO" id="GO:0005743">
    <property type="term" value="C:mitochondrial inner membrane"/>
    <property type="evidence" value="ECO:0007669"/>
    <property type="project" value="UniProtKB-SubCell"/>
</dbReference>
<dbReference type="GO" id="GO:0045275">
    <property type="term" value="C:respiratory chain complex III"/>
    <property type="evidence" value="ECO:0007669"/>
    <property type="project" value="InterPro"/>
</dbReference>
<dbReference type="GO" id="GO:0046872">
    <property type="term" value="F:metal ion binding"/>
    <property type="evidence" value="ECO:0007669"/>
    <property type="project" value="UniProtKB-KW"/>
</dbReference>
<dbReference type="GO" id="GO:0008121">
    <property type="term" value="F:ubiquinol-cytochrome-c reductase activity"/>
    <property type="evidence" value="ECO:0007669"/>
    <property type="project" value="InterPro"/>
</dbReference>
<dbReference type="GO" id="GO:0006122">
    <property type="term" value="P:mitochondrial electron transport, ubiquinol to cytochrome c"/>
    <property type="evidence" value="ECO:0007669"/>
    <property type="project" value="TreeGrafter"/>
</dbReference>
<dbReference type="CDD" id="cd00290">
    <property type="entry name" value="cytochrome_b_C"/>
    <property type="match status" value="1"/>
</dbReference>
<dbReference type="CDD" id="cd00284">
    <property type="entry name" value="Cytochrome_b_N"/>
    <property type="match status" value="1"/>
</dbReference>
<dbReference type="Gene3D" id="1.20.810.10">
    <property type="entry name" value="Cytochrome Bc1 Complex, Chain C"/>
    <property type="match status" value="1"/>
</dbReference>
<dbReference type="InterPro" id="IPR005798">
    <property type="entry name" value="Cyt_b/b6_C"/>
</dbReference>
<dbReference type="InterPro" id="IPR036150">
    <property type="entry name" value="Cyt_b/b6_C_sf"/>
</dbReference>
<dbReference type="InterPro" id="IPR005797">
    <property type="entry name" value="Cyt_b/b6_N"/>
</dbReference>
<dbReference type="InterPro" id="IPR027387">
    <property type="entry name" value="Cytb/b6-like_sf"/>
</dbReference>
<dbReference type="InterPro" id="IPR030689">
    <property type="entry name" value="Cytochrome_b"/>
</dbReference>
<dbReference type="InterPro" id="IPR048260">
    <property type="entry name" value="Cytochrome_b_C_euk/bac"/>
</dbReference>
<dbReference type="InterPro" id="IPR048259">
    <property type="entry name" value="Cytochrome_b_N_euk/bac"/>
</dbReference>
<dbReference type="InterPro" id="IPR016174">
    <property type="entry name" value="Di-haem_cyt_TM"/>
</dbReference>
<dbReference type="PANTHER" id="PTHR19271">
    <property type="entry name" value="CYTOCHROME B"/>
    <property type="match status" value="1"/>
</dbReference>
<dbReference type="PANTHER" id="PTHR19271:SF16">
    <property type="entry name" value="CYTOCHROME B"/>
    <property type="match status" value="1"/>
</dbReference>
<dbReference type="Pfam" id="PF00032">
    <property type="entry name" value="Cytochrom_B_C"/>
    <property type="match status" value="1"/>
</dbReference>
<dbReference type="Pfam" id="PF00033">
    <property type="entry name" value="Cytochrome_B"/>
    <property type="match status" value="1"/>
</dbReference>
<dbReference type="PIRSF" id="PIRSF038885">
    <property type="entry name" value="COB"/>
    <property type="match status" value="1"/>
</dbReference>
<dbReference type="SUPFAM" id="SSF81648">
    <property type="entry name" value="a domain/subunit of cytochrome bc1 complex (Ubiquinol-cytochrome c reductase)"/>
    <property type="match status" value="1"/>
</dbReference>
<dbReference type="SUPFAM" id="SSF81342">
    <property type="entry name" value="Transmembrane di-heme cytochromes"/>
    <property type="match status" value="1"/>
</dbReference>
<dbReference type="PROSITE" id="PS51003">
    <property type="entry name" value="CYTB_CTER"/>
    <property type="match status" value="1"/>
</dbReference>
<dbReference type="PROSITE" id="PS51002">
    <property type="entry name" value="CYTB_NTER"/>
    <property type="match status" value="1"/>
</dbReference>